<comment type="function">
    <text evidence="1">Forms part of the ribosomal stalk which helps the ribosome interact with GTP-bound translation factors. Is thus essential for accurate translation.</text>
</comment>
<comment type="subunit">
    <text evidence="1">Homodimer. Part of the ribosomal stalk of the 50S ribosomal subunit. Forms a multimeric L10(L12)X complex, where L10 forms an elongated spine to which 2 to 4 L12 dimers bind in a sequential fashion. Binds GTP-bound translation factors.</text>
</comment>
<comment type="similarity">
    <text evidence="1">Belongs to the bacterial ribosomal protein bL12 family.</text>
</comment>
<reference key="1">
    <citation type="journal article" date="2005" name="Proc. Natl. Acad. Sci. U.S.A.">
        <title>The genome of Salinibacter ruber: convergence and gene exchange among hyperhalophilic bacteria and archaea.</title>
        <authorList>
            <person name="Mongodin E.F."/>
            <person name="Nelson K.E."/>
            <person name="Daugherty S."/>
            <person name="DeBoy R.T."/>
            <person name="Wister J."/>
            <person name="Khouri H."/>
            <person name="Weidman J."/>
            <person name="Walsh D.A."/>
            <person name="Papke R.T."/>
            <person name="Sanchez Perez G."/>
            <person name="Sharma A.K."/>
            <person name="Nesbo C.L."/>
            <person name="MacLeod D."/>
            <person name="Bapteste E."/>
            <person name="Doolittle W.F."/>
            <person name="Charlebois R.L."/>
            <person name="Legault B."/>
            <person name="Rodriguez-Valera F."/>
        </authorList>
    </citation>
    <scope>NUCLEOTIDE SEQUENCE [LARGE SCALE GENOMIC DNA]</scope>
    <source>
        <strain>DSM 13855 / CECT 5946 / M31</strain>
    </source>
</reference>
<organism>
    <name type="scientific">Salinibacter ruber (strain DSM 13855 / M31)</name>
    <dbReference type="NCBI Taxonomy" id="309807"/>
    <lineage>
        <taxon>Bacteria</taxon>
        <taxon>Pseudomonadati</taxon>
        <taxon>Rhodothermota</taxon>
        <taxon>Rhodothermia</taxon>
        <taxon>Rhodothermales</taxon>
        <taxon>Salinibacteraceae</taxon>
        <taxon>Salinibacter</taxon>
    </lineage>
</organism>
<sequence length="127" mass="13219">MADIEELAEQLVGLTIQEANELANHLEEEYDIQPASAGVAVAADGGGGADGDAEEEEQTAFDVVLTGIGGNKIQVIKEVRSITGMGLKEAKSLVDEAPNPVSEGVSREEADDLKAQIEDAGGEVELQ</sequence>
<gene>
    <name evidence="1" type="primary">rplL</name>
    <name type="ordered locus">SRU_1759</name>
</gene>
<dbReference type="EMBL" id="CP000159">
    <property type="protein sequence ID" value="ABC45237.1"/>
    <property type="molecule type" value="Genomic_DNA"/>
</dbReference>
<dbReference type="RefSeq" id="WP_011404503.1">
    <property type="nucleotide sequence ID" value="NC_007677.1"/>
</dbReference>
<dbReference type="RefSeq" id="YP_445877.1">
    <property type="nucleotide sequence ID" value="NC_007677.1"/>
</dbReference>
<dbReference type="SMR" id="Q2S1Q4"/>
<dbReference type="STRING" id="309807.SRU_1759"/>
<dbReference type="EnsemblBacteria" id="ABC45237">
    <property type="protein sequence ID" value="ABC45237"/>
    <property type="gene ID" value="SRU_1759"/>
</dbReference>
<dbReference type="GeneID" id="83728688"/>
<dbReference type="KEGG" id="sru:SRU_1759"/>
<dbReference type="PATRIC" id="fig|309807.25.peg.1826"/>
<dbReference type="eggNOG" id="COG0222">
    <property type="taxonomic scope" value="Bacteria"/>
</dbReference>
<dbReference type="HOGENOM" id="CLU_086499_3_0_10"/>
<dbReference type="OrthoDB" id="9811748at2"/>
<dbReference type="Proteomes" id="UP000008674">
    <property type="component" value="Chromosome"/>
</dbReference>
<dbReference type="GO" id="GO:0022625">
    <property type="term" value="C:cytosolic large ribosomal subunit"/>
    <property type="evidence" value="ECO:0007669"/>
    <property type="project" value="TreeGrafter"/>
</dbReference>
<dbReference type="GO" id="GO:0003729">
    <property type="term" value="F:mRNA binding"/>
    <property type="evidence" value="ECO:0007669"/>
    <property type="project" value="TreeGrafter"/>
</dbReference>
<dbReference type="GO" id="GO:0003735">
    <property type="term" value="F:structural constituent of ribosome"/>
    <property type="evidence" value="ECO:0007669"/>
    <property type="project" value="InterPro"/>
</dbReference>
<dbReference type="GO" id="GO:0006412">
    <property type="term" value="P:translation"/>
    <property type="evidence" value="ECO:0007669"/>
    <property type="project" value="UniProtKB-UniRule"/>
</dbReference>
<dbReference type="CDD" id="cd00387">
    <property type="entry name" value="Ribosomal_L7_L12"/>
    <property type="match status" value="1"/>
</dbReference>
<dbReference type="FunFam" id="3.30.1390.10:FF:000001">
    <property type="entry name" value="50S ribosomal protein L7/L12"/>
    <property type="match status" value="1"/>
</dbReference>
<dbReference type="Gene3D" id="3.30.1390.10">
    <property type="match status" value="1"/>
</dbReference>
<dbReference type="Gene3D" id="1.20.5.710">
    <property type="entry name" value="Single helix bin"/>
    <property type="match status" value="1"/>
</dbReference>
<dbReference type="HAMAP" id="MF_00368">
    <property type="entry name" value="Ribosomal_bL12"/>
    <property type="match status" value="1"/>
</dbReference>
<dbReference type="InterPro" id="IPR000206">
    <property type="entry name" value="Ribosomal_bL12"/>
</dbReference>
<dbReference type="InterPro" id="IPR013823">
    <property type="entry name" value="Ribosomal_bL12_C"/>
</dbReference>
<dbReference type="InterPro" id="IPR014719">
    <property type="entry name" value="Ribosomal_bL12_C/ClpS-like"/>
</dbReference>
<dbReference type="InterPro" id="IPR008932">
    <property type="entry name" value="Ribosomal_bL12_oligo"/>
</dbReference>
<dbReference type="InterPro" id="IPR036235">
    <property type="entry name" value="Ribosomal_bL12_oligo_N_sf"/>
</dbReference>
<dbReference type="NCBIfam" id="TIGR00855">
    <property type="entry name" value="L12"/>
    <property type="match status" value="1"/>
</dbReference>
<dbReference type="PANTHER" id="PTHR45987">
    <property type="entry name" value="39S RIBOSOMAL PROTEIN L12"/>
    <property type="match status" value="1"/>
</dbReference>
<dbReference type="PANTHER" id="PTHR45987:SF4">
    <property type="entry name" value="LARGE RIBOSOMAL SUBUNIT PROTEIN BL12M"/>
    <property type="match status" value="1"/>
</dbReference>
<dbReference type="Pfam" id="PF00542">
    <property type="entry name" value="Ribosomal_L12"/>
    <property type="match status" value="1"/>
</dbReference>
<dbReference type="Pfam" id="PF16320">
    <property type="entry name" value="Ribosomal_L12_N"/>
    <property type="match status" value="1"/>
</dbReference>
<dbReference type="SUPFAM" id="SSF54736">
    <property type="entry name" value="ClpS-like"/>
    <property type="match status" value="1"/>
</dbReference>
<dbReference type="SUPFAM" id="SSF48300">
    <property type="entry name" value="Ribosomal protein L7/12, oligomerisation (N-terminal) domain"/>
    <property type="match status" value="1"/>
</dbReference>
<accession>Q2S1Q4</accession>
<feature type="chain" id="PRO_0000243489" description="Large ribosomal subunit protein bL12">
    <location>
        <begin position="1"/>
        <end position="127"/>
    </location>
</feature>
<feature type="region of interest" description="Disordered" evidence="2">
    <location>
        <begin position="93"/>
        <end position="127"/>
    </location>
</feature>
<feature type="compositionally biased region" description="Basic and acidic residues" evidence="2">
    <location>
        <begin position="105"/>
        <end position="117"/>
    </location>
</feature>
<evidence type="ECO:0000255" key="1">
    <source>
        <dbReference type="HAMAP-Rule" id="MF_00368"/>
    </source>
</evidence>
<evidence type="ECO:0000256" key="2">
    <source>
        <dbReference type="SAM" id="MobiDB-lite"/>
    </source>
</evidence>
<evidence type="ECO:0000305" key="3"/>
<name>RL7_SALRD</name>
<protein>
    <recommendedName>
        <fullName evidence="1">Large ribosomal subunit protein bL12</fullName>
    </recommendedName>
    <alternativeName>
        <fullName evidence="3">50S ribosomal protein L7/L12</fullName>
    </alternativeName>
</protein>
<keyword id="KW-1185">Reference proteome</keyword>
<keyword id="KW-0687">Ribonucleoprotein</keyword>
<keyword id="KW-0689">Ribosomal protein</keyword>
<proteinExistence type="inferred from homology"/>